<sequence length="431" mass="47958">MQMFCYQCSQTANGTGCTEYGVCGKSPTVARLQDNLVFAIKGISAYYYHARELGYDDPEIAGFLDEALYSTLTNVNFDAQSFVEYALEAGRMNLKAMQLLKKAHIETYGEPTPVEVETGTKKGKGIIVTGHNLKALEELLKQVEGTNVYVYTHSEMLPAHGYPGLRKYKNLIGNLGKAWYDQRKLFAEYPVAILGTSNCVLIPSESYRDRMFTTSIARLPGVKHIDGYDYTEVIEKAKSLPDLEEKPGSYKLRTGFSTSVVVSLADKIKELVEAGKIKHFLVVGGCDVPFKRNEYYREFVQKLPKETVVITLACGKFRINDLDLGDIDGIPRLIDVGQCNDTIVAIEIAQALAKVFGVEVTELPLTLVLTWMEQKAVAILWTLLALGLKNIYVGPVLPAWVNEDILKVLTAEFGLKTISEPEKDIKEILKV</sequence>
<gene>
    <name evidence="1" type="primary">hcp</name>
    <name type="ordered locus">TM_1172</name>
</gene>
<comment type="function">
    <text evidence="1">Catalyzes the reduction of hydroxylamine to form NH(3) and H(2)O.</text>
</comment>
<comment type="catalytic activity">
    <reaction evidence="1">
        <text>A + NH4(+) + H2O = hydroxylamine + AH2 + H(+)</text>
        <dbReference type="Rhea" id="RHEA:22052"/>
        <dbReference type="ChEBI" id="CHEBI:13193"/>
        <dbReference type="ChEBI" id="CHEBI:15377"/>
        <dbReference type="ChEBI" id="CHEBI:15378"/>
        <dbReference type="ChEBI" id="CHEBI:15429"/>
        <dbReference type="ChEBI" id="CHEBI:17499"/>
        <dbReference type="ChEBI" id="CHEBI:28938"/>
        <dbReference type="EC" id="1.7.99.1"/>
    </reaction>
</comment>
<comment type="cofactor">
    <cofactor evidence="1">
        <name>[4Fe-4S] cluster</name>
        <dbReference type="ChEBI" id="CHEBI:49883"/>
    </cofactor>
    <text evidence="1">Binds 1 [4Fe-4S] cluster.</text>
</comment>
<comment type="cofactor">
    <cofactor evidence="1">
        <name>hybrid [4Fe-2O-2S] cluster</name>
        <dbReference type="ChEBI" id="CHEBI:60519"/>
    </cofactor>
    <text evidence="1">Binds 1 hybrid [4Fe-2O-2S] cluster.</text>
</comment>
<comment type="subcellular location">
    <subcellularLocation>
        <location evidence="1">Cytoplasm</location>
    </subcellularLocation>
</comment>
<comment type="similarity">
    <text evidence="1">Belongs to the HCP family.</text>
</comment>
<evidence type="ECO:0000255" key="1">
    <source>
        <dbReference type="HAMAP-Rule" id="MF_00069"/>
    </source>
</evidence>
<dbReference type="EC" id="1.7.99.1" evidence="1"/>
<dbReference type="EMBL" id="AE000512">
    <property type="protein sequence ID" value="AAD36247.1"/>
    <property type="molecule type" value="Genomic_DNA"/>
</dbReference>
<dbReference type="PIR" id="G72285">
    <property type="entry name" value="G72285"/>
</dbReference>
<dbReference type="RefSeq" id="NP_228977.2">
    <property type="nucleotide sequence ID" value="NC_000853.1"/>
</dbReference>
<dbReference type="RefSeq" id="WP_004080194.1">
    <property type="nucleotide sequence ID" value="NC_000853.1"/>
</dbReference>
<dbReference type="SMR" id="Q9X0Q4"/>
<dbReference type="STRING" id="243274.TM_1172"/>
<dbReference type="PaxDb" id="243274-THEMA_08475"/>
<dbReference type="DNASU" id="898314"/>
<dbReference type="EnsemblBacteria" id="AAD36247">
    <property type="protein sequence ID" value="AAD36247"/>
    <property type="gene ID" value="TM_1172"/>
</dbReference>
<dbReference type="KEGG" id="tma:TM1172"/>
<dbReference type="KEGG" id="tmi:THEMA_08475"/>
<dbReference type="KEGG" id="tmm:Tmari_1179"/>
<dbReference type="KEGG" id="tmw:THMA_1197"/>
<dbReference type="PATRIC" id="fig|243274.5.peg.1190"/>
<dbReference type="eggNOG" id="COG1151">
    <property type="taxonomic scope" value="Bacteria"/>
</dbReference>
<dbReference type="InParanoid" id="Q9X0Q4"/>
<dbReference type="OrthoDB" id="9761526at2"/>
<dbReference type="Proteomes" id="UP000008183">
    <property type="component" value="Chromosome"/>
</dbReference>
<dbReference type="GO" id="GO:0005737">
    <property type="term" value="C:cytoplasm"/>
    <property type="evidence" value="ECO:0007669"/>
    <property type="project" value="UniProtKB-SubCell"/>
</dbReference>
<dbReference type="GO" id="GO:0051539">
    <property type="term" value="F:4 iron, 4 sulfur cluster binding"/>
    <property type="evidence" value="ECO:0007669"/>
    <property type="project" value="UniProtKB-KW"/>
</dbReference>
<dbReference type="GO" id="GO:0050418">
    <property type="term" value="F:hydroxylamine reductase activity"/>
    <property type="evidence" value="ECO:0000318"/>
    <property type="project" value="GO_Central"/>
</dbReference>
<dbReference type="GO" id="GO:0046872">
    <property type="term" value="F:metal ion binding"/>
    <property type="evidence" value="ECO:0007669"/>
    <property type="project" value="UniProtKB-KW"/>
</dbReference>
<dbReference type="GO" id="GO:0004601">
    <property type="term" value="F:peroxidase activity"/>
    <property type="evidence" value="ECO:0000318"/>
    <property type="project" value="GO_Central"/>
</dbReference>
<dbReference type="GO" id="GO:0046210">
    <property type="term" value="P:nitric oxide catabolic process"/>
    <property type="evidence" value="ECO:0000318"/>
    <property type="project" value="GO_Central"/>
</dbReference>
<dbReference type="GO" id="GO:0042542">
    <property type="term" value="P:response to hydrogen peroxide"/>
    <property type="evidence" value="ECO:0000318"/>
    <property type="project" value="GO_Central"/>
</dbReference>
<dbReference type="CDD" id="cd01914">
    <property type="entry name" value="HCP"/>
    <property type="match status" value="1"/>
</dbReference>
<dbReference type="Gene3D" id="1.20.1270.20">
    <property type="match status" value="1"/>
</dbReference>
<dbReference type="Gene3D" id="3.40.50.2030">
    <property type="match status" value="2"/>
</dbReference>
<dbReference type="HAMAP" id="MF_00069">
    <property type="entry name" value="Hydroxylam_reduct"/>
    <property type="match status" value="1"/>
</dbReference>
<dbReference type="InterPro" id="IPR004137">
    <property type="entry name" value="HCP/CODH"/>
</dbReference>
<dbReference type="InterPro" id="IPR010048">
    <property type="entry name" value="Hydroxylam_reduct"/>
</dbReference>
<dbReference type="InterPro" id="IPR016099">
    <property type="entry name" value="Prismane-like_a/b-sand"/>
</dbReference>
<dbReference type="InterPro" id="IPR011254">
    <property type="entry name" value="Prismane-like_sf"/>
</dbReference>
<dbReference type="InterPro" id="IPR016100">
    <property type="entry name" value="Prismane_a-bundle"/>
</dbReference>
<dbReference type="NCBIfam" id="TIGR01703">
    <property type="entry name" value="hybrid_clust"/>
    <property type="match status" value="1"/>
</dbReference>
<dbReference type="NCBIfam" id="NF003658">
    <property type="entry name" value="PRK05290.1"/>
    <property type="match status" value="1"/>
</dbReference>
<dbReference type="PANTHER" id="PTHR30109">
    <property type="entry name" value="HYDROXYLAMINE REDUCTASE"/>
    <property type="match status" value="1"/>
</dbReference>
<dbReference type="PANTHER" id="PTHR30109:SF0">
    <property type="entry name" value="HYDROXYLAMINE REDUCTASE"/>
    <property type="match status" value="1"/>
</dbReference>
<dbReference type="Pfam" id="PF03063">
    <property type="entry name" value="Prismane"/>
    <property type="match status" value="2"/>
</dbReference>
<dbReference type="SUPFAM" id="SSF56821">
    <property type="entry name" value="Prismane protein-like"/>
    <property type="match status" value="1"/>
</dbReference>
<keyword id="KW-0004">4Fe-4S</keyword>
<keyword id="KW-0963">Cytoplasm</keyword>
<keyword id="KW-0408">Iron</keyword>
<keyword id="KW-0411">Iron-sulfur</keyword>
<keyword id="KW-0479">Metal-binding</keyword>
<keyword id="KW-0560">Oxidoreductase</keyword>
<keyword id="KW-1185">Reference proteome</keyword>
<reference key="1">
    <citation type="journal article" date="1999" name="Nature">
        <title>Evidence for lateral gene transfer between Archaea and Bacteria from genome sequence of Thermotoga maritima.</title>
        <authorList>
            <person name="Nelson K.E."/>
            <person name="Clayton R.A."/>
            <person name="Gill S.R."/>
            <person name="Gwinn M.L."/>
            <person name="Dodson R.J."/>
            <person name="Haft D.H."/>
            <person name="Hickey E.K."/>
            <person name="Peterson J.D."/>
            <person name="Nelson W.C."/>
            <person name="Ketchum K.A."/>
            <person name="McDonald L.A."/>
            <person name="Utterback T.R."/>
            <person name="Malek J.A."/>
            <person name="Linher K.D."/>
            <person name="Garrett M.M."/>
            <person name="Stewart A.M."/>
            <person name="Cotton M.D."/>
            <person name="Pratt M.S."/>
            <person name="Phillips C.A."/>
            <person name="Richardson D.L."/>
            <person name="Heidelberg J.F."/>
            <person name="Sutton G.G."/>
            <person name="Fleischmann R.D."/>
            <person name="Eisen J.A."/>
            <person name="White O."/>
            <person name="Salzberg S.L."/>
            <person name="Smith H.O."/>
            <person name="Venter J.C."/>
            <person name="Fraser C.M."/>
        </authorList>
    </citation>
    <scope>NUCLEOTIDE SEQUENCE [LARGE SCALE GENOMIC DNA]</scope>
    <source>
        <strain>ATCC 43589 / DSM 3109 / JCM 10099 / NBRC 100826 / MSB8</strain>
    </source>
</reference>
<feature type="chain" id="PRO_0000151684" description="Hydroxylamine reductase">
    <location>
        <begin position="1"/>
        <end position="431"/>
    </location>
</feature>
<feature type="binding site" evidence="1">
    <location>
        <position position="5"/>
    </location>
    <ligand>
        <name>[4Fe-4S] cluster</name>
        <dbReference type="ChEBI" id="CHEBI:49883"/>
    </ligand>
</feature>
<feature type="binding site" evidence="1">
    <location>
        <position position="8"/>
    </location>
    <ligand>
        <name>[4Fe-4S] cluster</name>
        <dbReference type="ChEBI" id="CHEBI:49883"/>
    </ligand>
</feature>
<feature type="binding site" evidence="1">
    <location>
        <position position="17"/>
    </location>
    <ligand>
        <name>[4Fe-4S] cluster</name>
        <dbReference type="ChEBI" id="CHEBI:49883"/>
    </ligand>
</feature>
<feature type="binding site" evidence="1">
    <location>
        <position position="23"/>
    </location>
    <ligand>
        <name>[4Fe-4S] cluster</name>
        <dbReference type="ChEBI" id="CHEBI:49883"/>
    </ligand>
</feature>
<feature type="binding site" evidence="1">
    <location>
        <position position="131"/>
    </location>
    <ligand>
        <name>hybrid [4Fe-2O-2S] cluster</name>
        <dbReference type="ChEBI" id="CHEBI:60519"/>
    </ligand>
</feature>
<feature type="binding site" evidence="1">
    <location>
        <position position="155"/>
    </location>
    <ligand>
        <name>hybrid [4Fe-2O-2S] cluster</name>
        <dbReference type="ChEBI" id="CHEBI:60519"/>
    </ligand>
</feature>
<feature type="binding site" evidence="1">
    <location>
        <position position="199"/>
    </location>
    <ligand>
        <name>hybrid [4Fe-2O-2S] cluster</name>
        <dbReference type="ChEBI" id="CHEBI:60519"/>
    </ligand>
</feature>
<feature type="binding site" description="via persulfide group" evidence="1">
    <location>
        <position position="286"/>
    </location>
    <ligand>
        <name>hybrid [4Fe-2O-2S] cluster</name>
        <dbReference type="ChEBI" id="CHEBI:60519"/>
    </ligand>
</feature>
<feature type="binding site" evidence="1">
    <location>
        <position position="314"/>
    </location>
    <ligand>
        <name>hybrid [4Fe-2O-2S] cluster</name>
        <dbReference type="ChEBI" id="CHEBI:60519"/>
    </ligand>
</feature>
<feature type="binding site" evidence="1">
    <location>
        <position position="339"/>
    </location>
    <ligand>
        <name>hybrid [4Fe-2O-2S] cluster</name>
        <dbReference type="ChEBI" id="CHEBI:60519"/>
    </ligand>
</feature>
<feature type="binding site" evidence="1">
    <location>
        <position position="373"/>
    </location>
    <ligand>
        <name>hybrid [4Fe-2O-2S] cluster</name>
        <dbReference type="ChEBI" id="CHEBI:60519"/>
    </ligand>
</feature>
<feature type="binding site" evidence="1">
    <location>
        <position position="375"/>
    </location>
    <ligand>
        <name>hybrid [4Fe-2O-2S] cluster</name>
        <dbReference type="ChEBI" id="CHEBI:60519"/>
    </ligand>
</feature>
<feature type="modified residue" description="Cysteine persulfide" evidence="1">
    <location>
        <position position="286"/>
    </location>
</feature>
<proteinExistence type="inferred from homology"/>
<name>HCP_THEMA</name>
<accession>Q9X0Q4</accession>
<protein>
    <recommendedName>
        <fullName evidence="1">Hydroxylamine reductase</fullName>
        <ecNumber evidence="1">1.7.99.1</ecNumber>
    </recommendedName>
    <alternativeName>
        <fullName evidence="1">Hybrid-cluster protein</fullName>
        <shortName evidence="1">HCP</shortName>
    </alternativeName>
    <alternativeName>
        <fullName evidence="1">Prismane protein</fullName>
    </alternativeName>
</protein>
<organism>
    <name type="scientific">Thermotoga maritima (strain ATCC 43589 / DSM 3109 / JCM 10099 / NBRC 100826 / MSB8)</name>
    <dbReference type="NCBI Taxonomy" id="243274"/>
    <lineage>
        <taxon>Bacteria</taxon>
        <taxon>Thermotogati</taxon>
        <taxon>Thermotogota</taxon>
        <taxon>Thermotogae</taxon>
        <taxon>Thermotogales</taxon>
        <taxon>Thermotogaceae</taxon>
        <taxon>Thermotoga</taxon>
    </lineage>
</organism>